<protein>
    <recommendedName>
        <fullName evidence="1">UPF0301 protein AZC_0488</fullName>
    </recommendedName>
</protein>
<evidence type="ECO:0000255" key="1">
    <source>
        <dbReference type="HAMAP-Rule" id="MF_00758"/>
    </source>
</evidence>
<comment type="similarity">
    <text evidence="1">Belongs to the UPF0301 (AlgH) family.</text>
</comment>
<reference key="1">
    <citation type="submission" date="2007-04" db="EMBL/GenBank/DDBJ databases">
        <title>Complete genome sequence of the nitrogen-fixing bacterium Azorhizobium caulinodans ORS571.</title>
        <authorList>
            <person name="Lee K.B."/>
            <person name="Backer P.D."/>
            <person name="Aono T."/>
            <person name="Liu C.T."/>
            <person name="Suzuki S."/>
            <person name="Suzuki T."/>
            <person name="Kaneko T."/>
            <person name="Yamada M."/>
            <person name="Tabata S."/>
            <person name="Kupfer D.M."/>
            <person name="Najar F.Z."/>
            <person name="Wiley G.B."/>
            <person name="Roe B."/>
            <person name="Binnewies T."/>
            <person name="Ussery D."/>
            <person name="Vereecke D."/>
            <person name="Gevers D."/>
            <person name="Holsters M."/>
            <person name="Oyaizu H."/>
        </authorList>
    </citation>
    <scope>NUCLEOTIDE SEQUENCE [LARGE SCALE GENOMIC DNA]</scope>
    <source>
        <strain>ATCC 43989 / DSM 5975 / JCM 20966 / LMG 6465 / NBRC 14845 / NCIMB 13405 / ORS 571</strain>
    </source>
</reference>
<name>Y488_AZOC5</name>
<sequence length="205" mass="21825">MMADRTISSPRGPGDFLDGQMLIAMPSMRDERFNRALVYICAHSAEGAMGIVVNQPATHIDFGDLLVQLDVVPATKRIQLPPRAELVKVLRGGPVETGRGFVLHSSDFFLENATLPIDNGICLTASLDILKAIAGGQGPESAVLALGYAGWAPGQLETEIQANGWLHCPADPELIFGESVDAKYDLALRKLGVHPGMLSTDAGHA</sequence>
<organism>
    <name type="scientific">Azorhizobium caulinodans (strain ATCC 43989 / DSM 5975 / JCM 20966 / LMG 6465 / NBRC 14845 / NCIMB 13405 / ORS 571)</name>
    <dbReference type="NCBI Taxonomy" id="438753"/>
    <lineage>
        <taxon>Bacteria</taxon>
        <taxon>Pseudomonadati</taxon>
        <taxon>Pseudomonadota</taxon>
        <taxon>Alphaproteobacteria</taxon>
        <taxon>Hyphomicrobiales</taxon>
        <taxon>Xanthobacteraceae</taxon>
        <taxon>Azorhizobium</taxon>
    </lineage>
</organism>
<dbReference type="EMBL" id="AP009384">
    <property type="protein sequence ID" value="BAF86486.1"/>
    <property type="molecule type" value="Genomic_DNA"/>
</dbReference>
<dbReference type="RefSeq" id="WP_012169019.1">
    <property type="nucleotide sequence ID" value="NC_009937.1"/>
</dbReference>
<dbReference type="SMR" id="A8IM50"/>
<dbReference type="STRING" id="438753.AZC_0488"/>
<dbReference type="KEGG" id="azc:AZC_0488"/>
<dbReference type="eggNOG" id="COG1678">
    <property type="taxonomic scope" value="Bacteria"/>
</dbReference>
<dbReference type="HOGENOM" id="CLU_057596_1_0_5"/>
<dbReference type="Proteomes" id="UP000000270">
    <property type="component" value="Chromosome"/>
</dbReference>
<dbReference type="GO" id="GO:0005829">
    <property type="term" value="C:cytosol"/>
    <property type="evidence" value="ECO:0007669"/>
    <property type="project" value="TreeGrafter"/>
</dbReference>
<dbReference type="Gene3D" id="3.40.1740.10">
    <property type="entry name" value="VC0467-like"/>
    <property type="match status" value="1"/>
</dbReference>
<dbReference type="HAMAP" id="MF_00758">
    <property type="entry name" value="UPF0301"/>
    <property type="match status" value="1"/>
</dbReference>
<dbReference type="InterPro" id="IPR003774">
    <property type="entry name" value="AlgH-like"/>
</dbReference>
<dbReference type="NCBIfam" id="NF001268">
    <property type="entry name" value="PRK00228.1-4"/>
    <property type="match status" value="1"/>
</dbReference>
<dbReference type="PANTHER" id="PTHR30327">
    <property type="entry name" value="UNCHARACTERIZED PROTEIN YQGE"/>
    <property type="match status" value="1"/>
</dbReference>
<dbReference type="PANTHER" id="PTHR30327:SF1">
    <property type="entry name" value="UPF0301 PROTEIN YQGE"/>
    <property type="match status" value="1"/>
</dbReference>
<dbReference type="Pfam" id="PF02622">
    <property type="entry name" value="DUF179"/>
    <property type="match status" value="1"/>
</dbReference>
<dbReference type="SUPFAM" id="SSF143456">
    <property type="entry name" value="VC0467-like"/>
    <property type="match status" value="1"/>
</dbReference>
<gene>
    <name type="ordered locus">AZC_0488</name>
</gene>
<feature type="chain" id="PRO_1000198253" description="UPF0301 protein AZC_0488">
    <location>
        <begin position="1"/>
        <end position="205"/>
    </location>
</feature>
<proteinExistence type="inferred from homology"/>
<keyword id="KW-1185">Reference proteome</keyword>
<accession>A8IM50</accession>